<keyword id="KW-0963">Cytoplasm</keyword>
<keyword id="KW-1185">Reference proteome</keyword>
<keyword id="KW-0677">Repeat</keyword>
<keyword id="KW-0808">Transferase</keyword>
<keyword id="KW-0833">Ubl conjugation pathway</keyword>
<evidence type="ECO:0000250" key="1">
    <source>
        <dbReference type="UniProtKB" id="P39940"/>
    </source>
</evidence>
<evidence type="ECO:0000250" key="2">
    <source>
        <dbReference type="UniProtKB" id="Q5BDP1"/>
    </source>
</evidence>
<evidence type="ECO:0000255" key="3">
    <source>
        <dbReference type="PROSITE-ProRule" id="PRU00041"/>
    </source>
</evidence>
<evidence type="ECO:0000255" key="4">
    <source>
        <dbReference type="PROSITE-ProRule" id="PRU00104"/>
    </source>
</evidence>
<evidence type="ECO:0000255" key="5">
    <source>
        <dbReference type="PROSITE-ProRule" id="PRU00224"/>
    </source>
</evidence>
<evidence type="ECO:0000256" key="6">
    <source>
        <dbReference type="SAM" id="MobiDB-lite"/>
    </source>
</evidence>
<evidence type="ECO:0000305" key="7"/>
<protein>
    <recommendedName>
        <fullName>Probable E3 ubiquitin-protein ligase hulA</fullName>
        <ecNumber>2.3.2.26</ecNumber>
    </recommendedName>
    <alternativeName>
        <fullName>HECT ubiquitin ligase A</fullName>
    </alternativeName>
    <alternativeName>
        <fullName>HECT-type E3 ubiquitin transferase RSP5</fullName>
    </alternativeName>
</protein>
<gene>
    <name type="primary">hulA</name>
    <name type="ORF">NFIA_016110</name>
</gene>
<proteinExistence type="inferred from homology"/>
<comment type="function">
    <text evidence="2">E3 ubiquitin-protein ligase which accepts ubiquitin from an E2 ubiquitin-conjugating enzyme in the form of a thioester and then directly transfers the ubiquitin to targeted substrates. Probably involved in the regulatory network controlling carbon source utilization.</text>
</comment>
<comment type="catalytic activity">
    <reaction>
        <text>S-ubiquitinyl-[E2 ubiquitin-conjugating enzyme]-L-cysteine + [acceptor protein]-L-lysine = [E2 ubiquitin-conjugating enzyme]-L-cysteine + N(6)-ubiquitinyl-[acceptor protein]-L-lysine.</text>
        <dbReference type="EC" id="2.3.2.26"/>
    </reaction>
</comment>
<comment type="pathway">
    <text>Protein modification; protein ubiquitination.</text>
</comment>
<comment type="subunit">
    <text evidence="2">Interacts with creD.</text>
</comment>
<comment type="subcellular location">
    <subcellularLocation>
        <location evidence="1">Cytoplasm</location>
    </subcellularLocation>
</comment>
<comment type="similarity">
    <text evidence="7">Belongs to the RSP5/NEDD4 family.</text>
</comment>
<feature type="chain" id="PRO_0000395711" description="Probable E3 ubiquitin-protein ligase hulA">
    <location>
        <begin position="1"/>
        <end position="816"/>
    </location>
</feature>
<feature type="domain" description="C2" evidence="3">
    <location>
        <begin position="1"/>
        <end position="112"/>
    </location>
</feature>
<feature type="domain" description="WW 1" evidence="5">
    <location>
        <begin position="230"/>
        <end position="263"/>
    </location>
</feature>
<feature type="domain" description="WW 2" evidence="5">
    <location>
        <begin position="334"/>
        <end position="367"/>
    </location>
</feature>
<feature type="domain" description="WW 3" evidence="5">
    <location>
        <begin position="394"/>
        <end position="427"/>
    </location>
</feature>
<feature type="domain" description="HECT" evidence="4">
    <location>
        <begin position="483"/>
        <end position="816"/>
    </location>
</feature>
<feature type="region of interest" description="Disordered" evidence="6">
    <location>
        <begin position="134"/>
        <end position="238"/>
    </location>
</feature>
<feature type="region of interest" description="Disordered" evidence="6">
    <location>
        <begin position="254"/>
        <end position="354"/>
    </location>
</feature>
<feature type="compositionally biased region" description="Low complexity" evidence="6">
    <location>
        <begin position="160"/>
        <end position="178"/>
    </location>
</feature>
<feature type="compositionally biased region" description="Polar residues" evidence="6">
    <location>
        <begin position="181"/>
        <end position="192"/>
    </location>
</feature>
<feature type="compositionally biased region" description="Low complexity" evidence="6">
    <location>
        <begin position="193"/>
        <end position="213"/>
    </location>
</feature>
<feature type="compositionally biased region" description="Polar residues" evidence="6">
    <location>
        <begin position="214"/>
        <end position="227"/>
    </location>
</feature>
<feature type="compositionally biased region" description="Polar residues" evidence="6">
    <location>
        <begin position="254"/>
        <end position="267"/>
    </location>
</feature>
<feature type="compositionally biased region" description="Basic and acidic residues" evidence="6">
    <location>
        <begin position="268"/>
        <end position="295"/>
    </location>
</feature>
<feature type="compositionally biased region" description="Polar residues" evidence="6">
    <location>
        <begin position="296"/>
        <end position="310"/>
    </location>
</feature>
<feature type="compositionally biased region" description="Low complexity" evidence="6">
    <location>
        <begin position="325"/>
        <end position="334"/>
    </location>
</feature>
<feature type="active site" description="Glycyl thioester intermediate" evidence="4">
    <location>
        <position position="784"/>
    </location>
</feature>
<sequence length="816" mass="92178">MGSNLPAQPNLRLTIIAADGLYKRDVFRFPDPFAVATVGGEQTHTTSVIKKTLNPYWNEMFDLRVNEDSILAIQIFDQKKFKKKDQGFLGVINVRIGDVIDLQMGGDEMLTRDLKKSNDNLVVHGKLIINLSTNLSTPNTNQANGLHRSHVQSSTSSGLVPQVAPSSSHPAASGAAPVDPSASNPSLNPQRVPSTTRPSSTAAPASAAGAAASNTHGSRTNLSSFEDSQGRLPAGWERREDNLGRTYYVDHNTRTTTWTRPSSNYNEHAQRSQREANMQLERRAHQSRMLPEDRTGANSPNLPESSQQAHTPPAGGSANAVSMMATGATTAGTGELPPGWEQRTTPEGRPYFVDHNTRTTTWVDPRRQQYIRMYGQNANGTNTTIQQQPVSQLGPLPSGWEMRLTNTARVYFVDHNTKTTTWDDPRLPSSLDQGVPQYKRDFRRKLIYFRSQPALRIMSGQCHVKVRRNNIFEDSYAEIMRQSASDLKKRLMIKFDGEDGLDYGGLSREFFFLLSHEMFNPFYCLFEYSAHDNYTLQINPHSGVNPEHLNYFKFIGRVVGLAIFHRRFLDSFFIGAFYKMMLRKKVSLQDMEGVDEDLHRNLTWTLDNDIEGVLELTFSVDDEKFGERRTIDLKPGGRDIPVTNENKAEYVELVTEWKIVKRVEEQFNAFMSGFNELIPADLVNVFDERELELLIGGIADIDVDDWKKHTDYRGYQESDEVIQNFWKVVRSWDAEQKSRLLQFTTGTSRIPVNGFKDLQGSDGPRRFTIEKSGDPAALPKSHTCFNRLDLPPYKSYETLEHKMSIAVEETLGFGQE</sequence>
<accession>A1D3C5</accession>
<dbReference type="EC" id="2.3.2.26"/>
<dbReference type="EMBL" id="DS027688">
    <property type="protein sequence ID" value="EAW22918.1"/>
    <property type="molecule type" value="Genomic_DNA"/>
</dbReference>
<dbReference type="RefSeq" id="XP_001264815.1">
    <property type="nucleotide sequence ID" value="XM_001264814.1"/>
</dbReference>
<dbReference type="SMR" id="A1D3C5"/>
<dbReference type="STRING" id="331117.A1D3C5"/>
<dbReference type="EnsemblFungi" id="EAW22918">
    <property type="protein sequence ID" value="EAW22918"/>
    <property type="gene ID" value="NFIA_016110"/>
</dbReference>
<dbReference type="GeneID" id="4591930"/>
<dbReference type="KEGG" id="nfi:NFIA_016110"/>
<dbReference type="VEuPathDB" id="FungiDB:NFIA_016110"/>
<dbReference type="eggNOG" id="KOG0940">
    <property type="taxonomic scope" value="Eukaryota"/>
</dbReference>
<dbReference type="HOGENOM" id="CLU_002173_0_0_1"/>
<dbReference type="OMA" id="WKRPTLD"/>
<dbReference type="OrthoDB" id="8068875at2759"/>
<dbReference type="UniPathway" id="UPA00143"/>
<dbReference type="Proteomes" id="UP000006702">
    <property type="component" value="Unassembled WGS sequence"/>
</dbReference>
<dbReference type="GO" id="GO:0005934">
    <property type="term" value="C:cellular bud tip"/>
    <property type="evidence" value="ECO:0007669"/>
    <property type="project" value="EnsemblFungi"/>
</dbReference>
<dbReference type="GO" id="GO:0022626">
    <property type="term" value="C:cytosolic ribosome"/>
    <property type="evidence" value="ECO:0007669"/>
    <property type="project" value="EnsemblFungi"/>
</dbReference>
<dbReference type="GO" id="GO:0010008">
    <property type="term" value="C:endosome membrane"/>
    <property type="evidence" value="ECO:0007669"/>
    <property type="project" value="EnsemblFungi"/>
</dbReference>
<dbReference type="GO" id="GO:0005794">
    <property type="term" value="C:Golgi apparatus"/>
    <property type="evidence" value="ECO:0007669"/>
    <property type="project" value="EnsemblFungi"/>
</dbReference>
<dbReference type="GO" id="GO:0005634">
    <property type="term" value="C:nucleus"/>
    <property type="evidence" value="ECO:0007669"/>
    <property type="project" value="EnsemblFungi"/>
</dbReference>
<dbReference type="GO" id="GO:1990306">
    <property type="term" value="C:RSP5-BUL ubiquitin ligase complex"/>
    <property type="evidence" value="ECO:0007669"/>
    <property type="project" value="EnsemblFungi"/>
</dbReference>
<dbReference type="GO" id="GO:0000151">
    <property type="term" value="C:ubiquitin ligase complex"/>
    <property type="evidence" value="ECO:0007669"/>
    <property type="project" value="EnsemblFungi"/>
</dbReference>
<dbReference type="GO" id="GO:0035091">
    <property type="term" value="F:phosphatidylinositol binding"/>
    <property type="evidence" value="ECO:0007669"/>
    <property type="project" value="EnsemblFungi"/>
</dbReference>
<dbReference type="GO" id="GO:0043130">
    <property type="term" value="F:ubiquitin binding"/>
    <property type="evidence" value="ECO:0007669"/>
    <property type="project" value="EnsemblFungi"/>
</dbReference>
<dbReference type="GO" id="GO:0004842">
    <property type="term" value="F:ubiquitin-protein transferase activity"/>
    <property type="evidence" value="ECO:0000250"/>
    <property type="project" value="UniProtKB"/>
</dbReference>
<dbReference type="GO" id="GO:0034450">
    <property type="term" value="F:ubiquitin-ubiquitin ligase activity"/>
    <property type="evidence" value="ECO:0007669"/>
    <property type="project" value="EnsemblFungi"/>
</dbReference>
<dbReference type="GO" id="GO:0034605">
    <property type="term" value="P:cellular response to heat"/>
    <property type="evidence" value="ECO:0007669"/>
    <property type="project" value="EnsemblFungi"/>
</dbReference>
<dbReference type="GO" id="GO:1903577">
    <property type="term" value="P:cellular response to L-arginine"/>
    <property type="evidence" value="ECO:0007669"/>
    <property type="project" value="EnsemblFungi"/>
</dbReference>
<dbReference type="GO" id="GO:0006325">
    <property type="term" value="P:chromatin organization"/>
    <property type="evidence" value="ECO:0007669"/>
    <property type="project" value="EnsemblFungi"/>
</dbReference>
<dbReference type="GO" id="GO:0010994">
    <property type="term" value="P:free ubiquitin chain polymerization"/>
    <property type="evidence" value="ECO:0007669"/>
    <property type="project" value="EnsemblFungi"/>
</dbReference>
<dbReference type="GO" id="GO:0072671">
    <property type="term" value="P:mitochondria-associated ubiquitin-dependent protein catabolic process"/>
    <property type="evidence" value="ECO:0007669"/>
    <property type="project" value="EnsemblFungi"/>
</dbReference>
<dbReference type="GO" id="GO:0007005">
    <property type="term" value="P:mitochondrion organization"/>
    <property type="evidence" value="ECO:0007669"/>
    <property type="project" value="EnsemblFungi"/>
</dbReference>
<dbReference type="GO" id="GO:0070651">
    <property type="term" value="P:nonfunctional rRNA decay"/>
    <property type="evidence" value="ECO:0007669"/>
    <property type="project" value="EnsemblFungi"/>
</dbReference>
<dbReference type="GO" id="GO:0016973">
    <property type="term" value="P:poly(A)+ mRNA export from nucleus"/>
    <property type="evidence" value="ECO:0007669"/>
    <property type="project" value="EnsemblFungi"/>
</dbReference>
<dbReference type="GO" id="GO:0045723">
    <property type="term" value="P:positive regulation of fatty acid biosynthetic process"/>
    <property type="evidence" value="ECO:0007669"/>
    <property type="project" value="EnsemblFungi"/>
</dbReference>
<dbReference type="GO" id="GO:0032436">
    <property type="term" value="P:positive regulation of proteasomal ubiquitin-dependent protein catabolic process"/>
    <property type="evidence" value="ECO:0007669"/>
    <property type="project" value="EnsemblFungi"/>
</dbReference>
<dbReference type="GO" id="GO:0048260">
    <property type="term" value="P:positive regulation of receptor-mediated endocytosis"/>
    <property type="evidence" value="ECO:0007669"/>
    <property type="project" value="EnsemblFungi"/>
</dbReference>
<dbReference type="GO" id="GO:0045944">
    <property type="term" value="P:positive regulation of transcription by RNA polymerase II"/>
    <property type="evidence" value="ECO:0007669"/>
    <property type="project" value="EnsemblFungi"/>
</dbReference>
<dbReference type="GO" id="GO:0070534">
    <property type="term" value="P:protein K63-linked ubiquitination"/>
    <property type="evidence" value="ECO:0007669"/>
    <property type="project" value="EnsemblFungi"/>
</dbReference>
<dbReference type="GO" id="GO:0006515">
    <property type="term" value="P:protein quality control for misfolded or incompletely synthesized proteins"/>
    <property type="evidence" value="ECO:0007669"/>
    <property type="project" value="EnsemblFungi"/>
</dbReference>
<dbReference type="GO" id="GO:0043328">
    <property type="term" value="P:protein transport to vacuole involved in ubiquitin-dependent protein catabolic process via the multivesicular body sorting pathway"/>
    <property type="evidence" value="ECO:0000250"/>
    <property type="project" value="UniProtKB"/>
</dbReference>
<dbReference type="GO" id="GO:0016567">
    <property type="term" value="P:protein ubiquitination"/>
    <property type="evidence" value="ECO:0000250"/>
    <property type="project" value="UniProtKB"/>
</dbReference>
<dbReference type="GO" id="GO:0032956">
    <property type="term" value="P:regulation of actin cytoskeleton organization"/>
    <property type="evidence" value="ECO:0007669"/>
    <property type="project" value="EnsemblFungi"/>
</dbReference>
<dbReference type="GO" id="GO:0010794">
    <property type="term" value="P:regulation of dolichol biosynthetic process"/>
    <property type="evidence" value="ECO:0007669"/>
    <property type="project" value="EnsemblFungi"/>
</dbReference>
<dbReference type="GO" id="GO:0032443">
    <property type="term" value="P:regulation of ergosterol biosynthetic process"/>
    <property type="evidence" value="ECO:0007669"/>
    <property type="project" value="EnsemblFungi"/>
</dbReference>
<dbReference type="GO" id="GO:0010793">
    <property type="term" value="P:regulation of mRNA export from nucleus"/>
    <property type="evidence" value="ECO:0007669"/>
    <property type="project" value="EnsemblFungi"/>
</dbReference>
<dbReference type="GO" id="GO:0006808">
    <property type="term" value="P:regulation of nitrogen utilization"/>
    <property type="evidence" value="ECO:0007669"/>
    <property type="project" value="EnsemblFungi"/>
</dbReference>
<dbReference type="GO" id="GO:0019220">
    <property type="term" value="P:regulation of phosphate metabolic process"/>
    <property type="evidence" value="ECO:0007669"/>
    <property type="project" value="EnsemblFungi"/>
</dbReference>
<dbReference type="GO" id="GO:0032880">
    <property type="term" value="P:regulation of protein localization"/>
    <property type="evidence" value="ECO:0007669"/>
    <property type="project" value="EnsemblFungi"/>
</dbReference>
<dbReference type="GO" id="GO:2000203">
    <property type="term" value="P:regulation of ribosomal large subunit export from nucleus"/>
    <property type="evidence" value="ECO:0007669"/>
    <property type="project" value="EnsemblFungi"/>
</dbReference>
<dbReference type="GO" id="GO:2000232">
    <property type="term" value="P:regulation of rRNA processing"/>
    <property type="evidence" value="ECO:0007669"/>
    <property type="project" value="EnsemblFungi"/>
</dbReference>
<dbReference type="GO" id="GO:2000238">
    <property type="term" value="P:regulation of tRNA export from nucleus"/>
    <property type="evidence" value="ECO:0007669"/>
    <property type="project" value="EnsemblFungi"/>
</dbReference>
<dbReference type="GO" id="GO:2000235">
    <property type="term" value="P:regulation of tRNA processing"/>
    <property type="evidence" value="ECO:0007669"/>
    <property type="project" value="EnsemblFungi"/>
</dbReference>
<dbReference type="GO" id="GO:0010795">
    <property type="term" value="P:regulation of ubiquinone biosynthetic process"/>
    <property type="evidence" value="ECO:0007669"/>
    <property type="project" value="EnsemblFungi"/>
</dbReference>
<dbReference type="GO" id="GO:0034517">
    <property type="term" value="P:ribophagy"/>
    <property type="evidence" value="ECO:0007669"/>
    <property type="project" value="EnsemblFungi"/>
</dbReference>
<dbReference type="GO" id="GO:0070086">
    <property type="term" value="P:ubiquitin-dependent endocytosis"/>
    <property type="evidence" value="ECO:0007669"/>
    <property type="project" value="EnsemblFungi"/>
</dbReference>
<dbReference type="CDD" id="cd08382">
    <property type="entry name" value="C2_Smurf-like"/>
    <property type="match status" value="1"/>
</dbReference>
<dbReference type="CDD" id="cd00078">
    <property type="entry name" value="HECTc"/>
    <property type="match status" value="1"/>
</dbReference>
<dbReference type="CDD" id="cd00201">
    <property type="entry name" value="WW"/>
    <property type="match status" value="3"/>
</dbReference>
<dbReference type="FunFam" id="2.20.70.10:FF:000011">
    <property type="entry name" value="E3 ubiquitin-protein ligase"/>
    <property type="match status" value="1"/>
</dbReference>
<dbReference type="FunFam" id="2.20.70.10:FF:000017">
    <property type="entry name" value="E3 ubiquitin-protein ligase"/>
    <property type="match status" value="1"/>
</dbReference>
<dbReference type="FunFam" id="2.20.70.10:FF:000053">
    <property type="entry name" value="E3 ubiquitin-protein ligase"/>
    <property type="match status" value="1"/>
</dbReference>
<dbReference type="FunFam" id="2.60.40.150:FF:000074">
    <property type="entry name" value="E3 ubiquitin-protein ligase"/>
    <property type="match status" value="1"/>
</dbReference>
<dbReference type="FunFam" id="3.90.1750.10:FF:000005">
    <property type="entry name" value="E3 ubiquitin-protein ligase"/>
    <property type="match status" value="1"/>
</dbReference>
<dbReference type="FunFam" id="3.30.2160.10:FF:000001">
    <property type="entry name" value="E3 ubiquitin-protein ligase NEDD4-like"/>
    <property type="match status" value="1"/>
</dbReference>
<dbReference type="FunFam" id="3.30.2410.10:FF:000001">
    <property type="entry name" value="E3 ubiquitin-protein ligase NEDD4-like"/>
    <property type="match status" value="1"/>
</dbReference>
<dbReference type="Gene3D" id="2.20.70.10">
    <property type="match status" value="2"/>
</dbReference>
<dbReference type="Gene3D" id="2.60.40.150">
    <property type="entry name" value="C2 domain"/>
    <property type="match status" value="1"/>
</dbReference>
<dbReference type="Gene3D" id="3.30.2160.10">
    <property type="entry name" value="Hect, E3 ligase catalytic domain"/>
    <property type="match status" value="1"/>
</dbReference>
<dbReference type="Gene3D" id="3.30.2410.10">
    <property type="entry name" value="Hect, E3 ligase catalytic domain"/>
    <property type="match status" value="1"/>
</dbReference>
<dbReference type="Gene3D" id="3.90.1750.10">
    <property type="entry name" value="Hect, E3 ligase catalytic domains"/>
    <property type="match status" value="1"/>
</dbReference>
<dbReference type="InterPro" id="IPR000008">
    <property type="entry name" value="C2_dom"/>
</dbReference>
<dbReference type="InterPro" id="IPR035892">
    <property type="entry name" value="C2_domain_sf"/>
</dbReference>
<dbReference type="InterPro" id="IPR024928">
    <property type="entry name" value="E3_ub_ligase_SMURF1"/>
</dbReference>
<dbReference type="InterPro" id="IPR050409">
    <property type="entry name" value="E3_ubiq-protein_ligase"/>
</dbReference>
<dbReference type="InterPro" id="IPR000569">
    <property type="entry name" value="HECT_dom"/>
</dbReference>
<dbReference type="InterPro" id="IPR035983">
    <property type="entry name" value="Hect_E3_ubiquitin_ligase"/>
</dbReference>
<dbReference type="InterPro" id="IPR001202">
    <property type="entry name" value="WW_dom"/>
</dbReference>
<dbReference type="InterPro" id="IPR036020">
    <property type="entry name" value="WW_dom_sf"/>
</dbReference>
<dbReference type="PANTHER" id="PTHR11254:SF440">
    <property type="entry name" value="E3 UBIQUITIN-PROTEIN LIGASE NEDD-4"/>
    <property type="match status" value="1"/>
</dbReference>
<dbReference type="PANTHER" id="PTHR11254">
    <property type="entry name" value="HECT DOMAIN UBIQUITIN-PROTEIN LIGASE"/>
    <property type="match status" value="1"/>
</dbReference>
<dbReference type="Pfam" id="PF00168">
    <property type="entry name" value="C2"/>
    <property type="match status" value="1"/>
</dbReference>
<dbReference type="Pfam" id="PF00632">
    <property type="entry name" value="HECT"/>
    <property type="match status" value="1"/>
</dbReference>
<dbReference type="Pfam" id="PF00397">
    <property type="entry name" value="WW"/>
    <property type="match status" value="3"/>
</dbReference>
<dbReference type="PIRSF" id="PIRSF001569">
    <property type="entry name" value="E3_ub_ligase_SMURF1"/>
    <property type="match status" value="1"/>
</dbReference>
<dbReference type="SMART" id="SM00239">
    <property type="entry name" value="C2"/>
    <property type="match status" value="1"/>
</dbReference>
<dbReference type="SMART" id="SM00119">
    <property type="entry name" value="HECTc"/>
    <property type="match status" value="1"/>
</dbReference>
<dbReference type="SMART" id="SM00456">
    <property type="entry name" value="WW"/>
    <property type="match status" value="3"/>
</dbReference>
<dbReference type="SUPFAM" id="SSF49562">
    <property type="entry name" value="C2 domain (Calcium/lipid-binding domain, CaLB)"/>
    <property type="match status" value="1"/>
</dbReference>
<dbReference type="SUPFAM" id="SSF56204">
    <property type="entry name" value="Hect, E3 ligase catalytic domain"/>
    <property type="match status" value="1"/>
</dbReference>
<dbReference type="SUPFAM" id="SSF51045">
    <property type="entry name" value="WW domain"/>
    <property type="match status" value="3"/>
</dbReference>
<dbReference type="PROSITE" id="PS50004">
    <property type="entry name" value="C2"/>
    <property type="match status" value="1"/>
</dbReference>
<dbReference type="PROSITE" id="PS50237">
    <property type="entry name" value="HECT"/>
    <property type="match status" value="1"/>
</dbReference>
<dbReference type="PROSITE" id="PS01159">
    <property type="entry name" value="WW_DOMAIN_1"/>
    <property type="match status" value="3"/>
</dbReference>
<dbReference type="PROSITE" id="PS50020">
    <property type="entry name" value="WW_DOMAIN_2"/>
    <property type="match status" value="3"/>
</dbReference>
<name>RSP5_NEOFI</name>
<reference key="1">
    <citation type="journal article" date="2008" name="PLoS Genet.">
        <title>Genomic islands in the pathogenic filamentous fungus Aspergillus fumigatus.</title>
        <authorList>
            <person name="Fedorova N.D."/>
            <person name="Khaldi N."/>
            <person name="Joardar V.S."/>
            <person name="Maiti R."/>
            <person name="Amedeo P."/>
            <person name="Anderson M.J."/>
            <person name="Crabtree J."/>
            <person name="Silva J.C."/>
            <person name="Badger J.H."/>
            <person name="Albarraq A."/>
            <person name="Angiuoli S."/>
            <person name="Bussey H."/>
            <person name="Bowyer P."/>
            <person name="Cotty P.J."/>
            <person name="Dyer P.S."/>
            <person name="Egan A."/>
            <person name="Galens K."/>
            <person name="Fraser-Liggett C.M."/>
            <person name="Haas B.J."/>
            <person name="Inman J.M."/>
            <person name="Kent R."/>
            <person name="Lemieux S."/>
            <person name="Malavazi I."/>
            <person name="Orvis J."/>
            <person name="Roemer T."/>
            <person name="Ronning C.M."/>
            <person name="Sundaram J.P."/>
            <person name="Sutton G."/>
            <person name="Turner G."/>
            <person name="Venter J.C."/>
            <person name="White O.R."/>
            <person name="Whitty B.R."/>
            <person name="Youngman P."/>
            <person name="Wolfe K.H."/>
            <person name="Goldman G.H."/>
            <person name="Wortman J.R."/>
            <person name="Jiang B."/>
            <person name="Denning D.W."/>
            <person name="Nierman W.C."/>
        </authorList>
    </citation>
    <scope>NUCLEOTIDE SEQUENCE [LARGE SCALE GENOMIC DNA]</scope>
    <source>
        <strain>ATCC 1020 / DSM 3700 / CBS 544.65 / FGSC A1164 / JCM 1740 / NRRL 181 / WB 181</strain>
    </source>
</reference>
<organism>
    <name type="scientific">Neosartorya fischeri (strain ATCC 1020 / DSM 3700 / CBS 544.65 / FGSC A1164 / JCM 1740 / NRRL 181 / WB 181)</name>
    <name type="common">Aspergillus fischerianus</name>
    <dbReference type="NCBI Taxonomy" id="331117"/>
    <lineage>
        <taxon>Eukaryota</taxon>
        <taxon>Fungi</taxon>
        <taxon>Dikarya</taxon>
        <taxon>Ascomycota</taxon>
        <taxon>Pezizomycotina</taxon>
        <taxon>Eurotiomycetes</taxon>
        <taxon>Eurotiomycetidae</taxon>
        <taxon>Eurotiales</taxon>
        <taxon>Aspergillaceae</taxon>
        <taxon>Aspergillus</taxon>
        <taxon>Aspergillus subgen. Fumigati</taxon>
    </lineage>
</organism>